<evidence type="ECO:0000250" key="1">
    <source>
        <dbReference type="UniProtKB" id="A2AS55"/>
    </source>
</evidence>
<evidence type="ECO:0000269" key="2">
    <source>
    </source>
</evidence>
<evidence type="ECO:0000305" key="3"/>
<evidence type="ECO:0000312" key="4">
    <source>
        <dbReference type="HGNC" id="HGNC:23471"/>
    </source>
</evidence>
<comment type="function">
    <text evidence="1">Required to prevent the misactivation of serine (Ser) with tRNA(Ala) by promoting the hydrolysis of Ser-mischarged tRNA(Ala), thereby playing a role in translational fidelity. Binds directly to the catalytic domain of AARS/AlaRS and captures Ser that is misactivated by AARS/AlaRS, preventing the charging of Ser adenylates to tRNA(Ala) and precluding Ser misincorporation in nascent peptides.</text>
</comment>
<comment type="subunit">
    <text evidence="1">Interacts with AARS; the interaction is direct.</text>
</comment>
<comment type="subcellular location">
    <subcellularLocation>
        <location evidence="1">Cytoplasm</location>
    </subcellularLocation>
    <subcellularLocation>
        <location evidence="1">Nucleus</location>
    </subcellularLocation>
</comment>
<comment type="alternative products">
    <event type="alternative splicing"/>
    <isoform>
        <id>Q6P6B7-1</id>
        <name>1</name>
        <sequence type="displayed"/>
    </isoform>
    <isoform>
        <id>Q6P6B7-2</id>
        <name>2</name>
        <sequence type="described" ref="VSP_047046 VSP_047047"/>
    </isoform>
</comment>
<comment type="domain">
    <text evidence="1">Side chains of Lys-102, Lys-135 and Lys-165 capture Ser that is misactivated by AARS/AlaRS.</text>
</comment>
<keyword id="KW-0025">Alternative splicing</keyword>
<keyword id="KW-0040">ANK repeat</keyword>
<keyword id="KW-0963">Cytoplasm</keyword>
<keyword id="KW-0539">Nucleus</keyword>
<keyword id="KW-1267">Proteomics identification</keyword>
<keyword id="KW-1185">Reference proteome</keyword>
<keyword id="KW-0677">Repeat</keyword>
<dbReference type="EMBL" id="AL137186">
    <property type="status" value="NOT_ANNOTATED_CDS"/>
    <property type="molecule type" value="Genomic_DNA"/>
</dbReference>
<dbReference type="EMBL" id="AL596094">
    <property type="status" value="NOT_ANNOTATED_CDS"/>
    <property type="molecule type" value="Genomic_DNA"/>
</dbReference>
<dbReference type="EMBL" id="BC062346">
    <property type="protein sequence ID" value="AAH62346.1"/>
    <property type="molecule type" value="mRNA"/>
</dbReference>
<dbReference type="EMBL" id="AL137614">
    <property type="protein sequence ID" value="CAB70843.1"/>
    <property type="molecule type" value="mRNA"/>
</dbReference>
<dbReference type="CCDS" id="CCDS31136.1">
    <molecule id="Q6P6B7-1"/>
</dbReference>
<dbReference type="CCDS" id="CCDS31137.1">
    <molecule id="Q6P6B7-2"/>
</dbReference>
<dbReference type="PIR" id="T46316">
    <property type="entry name" value="T46316"/>
</dbReference>
<dbReference type="RefSeq" id="NP_001009941.1">
    <molecule id="Q6P6B7-1"/>
    <property type="nucleotide sequence ID" value="NM_001009941.3"/>
</dbReference>
<dbReference type="RefSeq" id="NP_001009943.1">
    <molecule id="Q6P6B7-2"/>
    <property type="nucleotide sequence ID" value="NM_001009943.3"/>
</dbReference>
<dbReference type="RefSeq" id="NP_061919.1">
    <molecule id="Q6P6B7-1"/>
    <property type="nucleotide sequence ID" value="NM_019046.3"/>
</dbReference>
<dbReference type="SMR" id="Q6P6B7"/>
<dbReference type="BioGRID" id="120015">
    <property type="interactions" value="7"/>
</dbReference>
<dbReference type="FunCoup" id="Q6P6B7">
    <property type="interactions" value="2676"/>
</dbReference>
<dbReference type="IntAct" id="Q6P6B7">
    <property type="interactions" value="6"/>
</dbReference>
<dbReference type="STRING" id="9606.ENSP00000369436"/>
<dbReference type="GlyGen" id="Q6P6B7">
    <property type="glycosylation" value="1 site, 1 O-linked glycan (1 site)"/>
</dbReference>
<dbReference type="iPTMnet" id="Q6P6B7"/>
<dbReference type="PhosphoSitePlus" id="Q6P6B7"/>
<dbReference type="BioMuta" id="ANKRD16"/>
<dbReference type="DMDM" id="74749136"/>
<dbReference type="jPOST" id="Q6P6B7"/>
<dbReference type="MassIVE" id="Q6P6B7"/>
<dbReference type="PaxDb" id="9606-ENSP00000369436"/>
<dbReference type="PeptideAtlas" id="Q6P6B7"/>
<dbReference type="ProteomicsDB" id="31852"/>
<dbReference type="ProteomicsDB" id="67019">
    <molecule id="Q6P6B7-1"/>
</dbReference>
<dbReference type="Pumba" id="Q6P6B7"/>
<dbReference type="Antibodypedia" id="51456">
    <property type="antibodies" value="33 antibodies from 14 providers"/>
</dbReference>
<dbReference type="DNASU" id="54522"/>
<dbReference type="Ensembl" id="ENST00000191063.8">
    <molecule id="Q6P6B7-2"/>
    <property type="protein sequence ID" value="ENSP00000352361.6"/>
    <property type="gene ID" value="ENSG00000134461.16"/>
</dbReference>
<dbReference type="Ensembl" id="ENST00000380092.8">
    <molecule id="Q6P6B7-1"/>
    <property type="protein sequence ID" value="ENSP00000369434.4"/>
    <property type="gene ID" value="ENSG00000134461.16"/>
</dbReference>
<dbReference type="Ensembl" id="ENST00000380094.10">
    <molecule id="Q6P6B7-1"/>
    <property type="protein sequence ID" value="ENSP00000369436.4"/>
    <property type="gene ID" value="ENSG00000134461.16"/>
</dbReference>
<dbReference type="GeneID" id="54522"/>
<dbReference type="KEGG" id="hsa:54522"/>
<dbReference type="MANE-Select" id="ENST00000380094.10">
    <property type="protein sequence ID" value="ENSP00000369436.4"/>
    <property type="RefSeq nucleotide sequence ID" value="NM_019046.3"/>
    <property type="RefSeq protein sequence ID" value="NP_061919.1"/>
</dbReference>
<dbReference type="UCSC" id="uc001iiq.4">
    <molecule id="Q6P6B7-1"/>
    <property type="organism name" value="human"/>
</dbReference>
<dbReference type="AGR" id="HGNC:23471"/>
<dbReference type="CTD" id="54522"/>
<dbReference type="DisGeNET" id="54522"/>
<dbReference type="GeneCards" id="ANKRD16"/>
<dbReference type="HGNC" id="HGNC:23471">
    <property type="gene designation" value="ANKRD16"/>
</dbReference>
<dbReference type="HPA" id="ENSG00000134461">
    <property type="expression patterns" value="Low tissue specificity"/>
</dbReference>
<dbReference type="MIM" id="618017">
    <property type="type" value="gene"/>
</dbReference>
<dbReference type="neXtProt" id="NX_Q6P6B7"/>
<dbReference type="OpenTargets" id="ENSG00000134461"/>
<dbReference type="PharmGKB" id="PA134916467"/>
<dbReference type="VEuPathDB" id="HostDB:ENSG00000134461"/>
<dbReference type="eggNOG" id="KOG0504">
    <property type="taxonomic scope" value="Eukaryota"/>
</dbReference>
<dbReference type="GeneTree" id="ENSGT00940000153969"/>
<dbReference type="HOGENOM" id="CLU_000134_48_2_1"/>
<dbReference type="InParanoid" id="Q6P6B7"/>
<dbReference type="OMA" id="TRCQYEP"/>
<dbReference type="OrthoDB" id="4772757at2759"/>
<dbReference type="PAN-GO" id="Q6P6B7">
    <property type="GO annotations" value="0 GO annotations based on evolutionary models"/>
</dbReference>
<dbReference type="PhylomeDB" id="Q6P6B7"/>
<dbReference type="TreeFam" id="TF329520"/>
<dbReference type="PathwayCommons" id="Q6P6B7"/>
<dbReference type="SignaLink" id="Q6P6B7"/>
<dbReference type="BioGRID-ORCS" id="54522">
    <property type="hits" value="12 hits in 1154 CRISPR screens"/>
</dbReference>
<dbReference type="ChiTaRS" id="ANKRD16">
    <property type="organism name" value="human"/>
</dbReference>
<dbReference type="GenomeRNAi" id="54522"/>
<dbReference type="Pharos" id="Q6P6B7">
    <property type="development level" value="Tdark"/>
</dbReference>
<dbReference type="PRO" id="PR:Q6P6B7"/>
<dbReference type="Proteomes" id="UP000005640">
    <property type="component" value="Chromosome 10"/>
</dbReference>
<dbReference type="RNAct" id="Q6P6B7">
    <property type="molecule type" value="protein"/>
</dbReference>
<dbReference type="Bgee" id="ENSG00000134461">
    <property type="expression patterns" value="Expressed in male germ line stem cell (sensu Vertebrata) in testis and 136 other cell types or tissues"/>
</dbReference>
<dbReference type="GO" id="GO:0005737">
    <property type="term" value="C:cytoplasm"/>
    <property type="evidence" value="ECO:0000250"/>
    <property type="project" value="UniProtKB"/>
</dbReference>
<dbReference type="GO" id="GO:0005634">
    <property type="term" value="C:nucleus"/>
    <property type="evidence" value="ECO:0000250"/>
    <property type="project" value="UniProtKB"/>
</dbReference>
<dbReference type="GO" id="GO:0006400">
    <property type="term" value="P:tRNA modification"/>
    <property type="evidence" value="ECO:0000250"/>
    <property type="project" value="UniProtKB"/>
</dbReference>
<dbReference type="FunFam" id="1.25.40.20:FF:000318">
    <property type="entry name" value="Ankyrin repeat domain 16"/>
    <property type="match status" value="1"/>
</dbReference>
<dbReference type="FunFam" id="1.25.40.20:FF:000336">
    <property type="entry name" value="Ankyrin repeat domain-containing protein 16"/>
    <property type="match status" value="1"/>
</dbReference>
<dbReference type="FunFam" id="1.25.40.20:FF:000522">
    <property type="entry name" value="Ankyrin repeat domain-containing protein 16"/>
    <property type="match status" value="1"/>
</dbReference>
<dbReference type="Gene3D" id="1.25.40.20">
    <property type="entry name" value="Ankyrin repeat-containing domain"/>
    <property type="match status" value="3"/>
</dbReference>
<dbReference type="InterPro" id="IPR002110">
    <property type="entry name" value="Ankyrin_rpt"/>
</dbReference>
<dbReference type="InterPro" id="IPR036770">
    <property type="entry name" value="Ankyrin_rpt-contain_sf"/>
</dbReference>
<dbReference type="PANTHER" id="PTHR24173">
    <property type="entry name" value="ANKYRIN REPEAT CONTAINING"/>
    <property type="match status" value="1"/>
</dbReference>
<dbReference type="PANTHER" id="PTHR24173:SF74">
    <property type="entry name" value="ANKYRIN REPEAT DOMAIN-CONTAINING PROTEIN 16"/>
    <property type="match status" value="1"/>
</dbReference>
<dbReference type="Pfam" id="PF00023">
    <property type="entry name" value="Ank"/>
    <property type="match status" value="1"/>
</dbReference>
<dbReference type="Pfam" id="PF12796">
    <property type="entry name" value="Ank_2"/>
    <property type="match status" value="3"/>
</dbReference>
<dbReference type="PRINTS" id="PR01415">
    <property type="entry name" value="ANKYRIN"/>
</dbReference>
<dbReference type="SMART" id="SM00248">
    <property type="entry name" value="ANK"/>
    <property type="match status" value="9"/>
</dbReference>
<dbReference type="SUPFAM" id="SSF48403">
    <property type="entry name" value="Ankyrin repeat"/>
    <property type="match status" value="1"/>
</dbReference>
<dbReference type="PROSITE" id="PS50297">
    <property type="entry name" value="ANK_REP_REGION"/>
    <property type="match status" value="1"/>
</dbReference>
<dbReference type="PROSITE" id="PS50088">
    <property type="entry name" value="ANK_REPEAT"/>
    <property type="match status" value="5"/>
</dbReference>
<reference key="1">
    <citation type="journal article" date="2004" name="Nature">
        <title>The DNA sequence and comparative analysis of human chromosome 10.</title>
        <authorList>
            <person name="Deloukas P."/>
            <person name="Earthrowl M.E."/>
            <person name="Grafham D.V."/>
            <person name="Rubenfield M."/>
            <person name="French L."/>
            <person name="Steward C.A."/>
            <person name="Sims S.K."/>
            <person name="Jones M.C."/>
            <person name="Searle S."/>
            <person name="Scott C."/>
            <person name="Howe K."/>
            <person name="Hunt S.E."/>
            <person name="Andrews T.D."/>
            <person name="Gilbert J.G.R."/>
            <person name="Swarbreck D."/>
            <person name="Ashurst J.L."/>
            <person name="Taylor A."/>
            <person name="Battles J."/>
            <person name="Bird C.P."/>
            <person name="Ainscough R."/>
            <person name="Almeida J.P."/>
            <person name="Ashwell R.I.S."/>
            <person name="Ambrose K.D."/>
            <person name="Babbage A.K."/>
            <person name="Bagguley C.L."/>
            <person name="Bailey J."/>
            <person name="Banerjee R."/>
            <person name="Bates K."/>
            <person name="Beasley H."/>
            <person name="Bray-Allen S."/>
            <person name="Brown A.J."/>
            <person name="Brown J.Y."/>
            <person name="Burford D.C."/>
            <person name="Burrill W."/>
            <person name="Burton J."/>
            <person name="Cahill P."/>
            <person name="Camire D."/>
            <person name="Carter N.P."/>
            <person name="Chapman J.C."/>
            <person name="Clark S.Y."/>
            <person name="Clarke G."/>
            <person name="Clee C.M."/>
            <person name="Clegg S."/>
            <person name="Corby N."/>
            <person name="Coulson A."/>
            <person name="Dhami P."/>
            <person name="Dutta I."/>
            <person name="Dunn M."/>
            <person name="Faulkner L."/>
            <person name="Frankish A."/>
            <person name="Frankland J.A."/>
            <person name="Garner P."/>
            <person name="Garnett J."/>
            <person name="Gribble S."/>
            <person name="Griffiths C."/>
            <person name="Grocock R."/>
            <person name="Gustafson E."/>
            <person name="Hammond S."/>
            <person name="Harley J.L."/>
            <person name="Hart E."/>
            <person name="Heath P.D."/>
            <person name="Ho T.P."/>
            <person name="Hopkins B."/>
            <person name="Horne J."/>
            <person name="Howden P.J."/>
            <person name="Huckle E."/>
            <person name="Hynds C."/>
            <person name="Johnson C."/>
            <person name="Johnson D."/>
            <person name="Kana A."/>
            <person name="Kay M."/>
            <person name="Kimberley A.M."/>
            <person name="Kershaw J.K."/>
            <person name="Kokkinaki M."/>
            <person name="Laird G.K."/>
            <person name="Lawlor S."/>
            <person name="Lee H.M."/>
            <person name="Leongamornlert D.A."/>
            <person name="Laird G."/>
            <person name="Lloyd C."/>
            <person name="Lloyd D.M."/>
            <person name="Loveland J."/>
            <person name="Lovell J."/>
            <person name="McLaren S."/>
            <person name="McLay K.E."/>
            <person name="McMurray A."/>
            <person name="Mashreghi-Mohammadi M."/>
            <person name="Matthews L."/>
            <person name="Milne S."/>
            <person name="Nickerson T."/>
            <person name="Nguyen M."/>
            <person name="Overton-Larty E."/>
            <person name="Palmer S.A."/>
            <person name="Pearce A.V."/>
            <person name="Peck A.I."/>
            <person name="Pelan S."/>
            <person name="Phillimore B."/>
            <person name="Porter K."/>
            <person name="Rice C.M."/>
            <person name="Rogosin A."/>
            <person name="Ross M.T."/>
            <person name="Sarafidou T."/>
            <person name="Sehra H.K."/>
            <person name="Shownkeen R."/>
            <person name="Skuce C.D."/>
            <person name="Smith M."/>
            <person name="Standring L."/>
            <person name="Sycamore N."/>
            <person name="Tester J."/>
            <person name="Thorpe A."/>
            <person name="Torcasso W."/>
            <person name="Tracey A."/>
            <person name="Tromans A."/>
            <person name="Tsolas J."/>
            <person name="Wall M."/>
            <person name="Walsh J."/>
            <person name="Wang H."/>
            <person name="Weinstock K."/>
            <person name="West A.P."/>
            <person name="Willey D.L."/>
            <person name="Whitehead S.L."/>
            <person name="Wilming L."/>
            <person name="Wray P.W."/>
            <person name="Young L."/>
            <person name="Chen Y."/>
            <person name="Lovering R.C."/>
            <person name="Moschonas N.K."/>
            <person name="Siebert R."/>
            <person name="Fechtel K."/>
            <person name="Bentley D."/>
            <person name="Durbin R.M."/>
            <person name="Hubbard T."/>
            <person name="Doucette-Stamm L."/>
            <person name="Beck S."/>
            <person name="Smith D.R."/>
            <person name="Rogers J."/>
        </authorList>
    </citation>
    <scope>NUCLEOTIDE SEQUENCE [LARGE SCALE GENOMIC DNA]</scope>
</reference>
<reference key="2">
    <citation type="journal article" date="2004" name="Genome Res.">
        <title>The status, quality, and expansion of the NIH full-length cDNA project: the Mammalian Gene Collection (MGC).</title>
        <authorList>
            <consortium name="The MGC Project Team"/>
        </authorList>
    </citation>
    <scope>NUCLEOTIDE SEQUENCE [LARGE SCALE MRNA] (ISOFORM 1)</scope>
    <source>
        <tissue>Placenta</tissue>
    </source>
</reference>
<reference key="3">
    <citation type="journal article" date="2007" name="BMC Genomics">
        <title>The full-ORF clone resource of the German cDNA consortium.</title>
        <authorList>
            <person name="Bechtel S."/>
            <person name="Rosenfelder H."/>
            <person name="Duda A."/>
            <person name="Schmidt C.P."/>
            <person name="Ernst U."/>
            <person name="Wellenreuther R."/>
            <person name="Mehrle A."/>
            <person name="Schuster C."/>
            <person name="Bahr A."/>
            <person name="Bloecker H."/>
            <person name="Heubner D."/>
            <person name="Hoerlein A."/>
            <person name="Michel G."/>
            <person name="Wedler H."/>
            <person name="Koehrer K."/>
            <person name="Ottenwaelder B."/>
            <person name="Poustka A."/>
            <person name="Wiemann S."/>
            <person name="Schupp I."/>
        </authorList>
    </citation>
    <scope>NUCLEOTIDE SEQUENCE [LARGE SCALE MRNA] OF 202-361 (ISOFORM 1)</scope>
    <scope>VARIANT ARG-353</scope>
    <source>
        <tissue>Testis</tissue>
    </source>
</reference>
<reference key="4">
    <citation type="journal article" date="2009" name="Sci. Signal.">
        <title>Quantitative phosphoproteomic analysis of T cell receptor signaling reveals system-wide modulation of protein-protein interactions.</title>
        <authorList>
            <person name="Mayya V."/>
            <person name="Lundgren D.H."/>
            <person name="Hwang S.-I."/>
            <person name="Rezaul K."/>
            <person name="Wu L."/>
            <person name="Eng J.K."/>
            <person name="Rodionov V."/>
            <person name="Han D.K."/>
        </authorList>
    </citation>
    <scope>IDENTIFICATION BY MASS SPECTROMETRY [LARGE SCALE ANALYSIS]</scope>
    <source>
        <tissue>Leukemic T-cell</tissue>
    </source>
</reference>
<protein>
    <recommendedName>
        <fullName evidence="3">Ankyrin repeat domain-containing protein 16</fullName>
    </recommendedName>
</protein>
<gene>
    <name evidence="4" type="primary">ANKRD16</name>
</gene>
<name>ANR16_HUMAN</name>
<organism>
    <name type="scientific">Homo sapiens</name>
    <name type="common">Human</name>
    <dbReference type="NCBI Taxonomy" id="9606"/>
    <lineage>
        <taxon>Eukaryota</taxon>
        <taxon>Metazoa</taxon>
        <taxon>Chordata</taxon>
        <taxon>Craniata</taxon>
        <taxon>Vertebrata</taxon>
        <taxon>Euteleostomi</taxon>
        <taxon>Mammalia</taxon>
        <taxon>Eutheria</taxon>
        <taxon>Euarchontoglires</taxon>
        <taxon>Primates</taxon>
        <taxon>Haplorrhini</taxon>
        <taxon>Catarrhini</taxon>
        <taxon>Hominidae</taxon>
        <taxon>Homo</taxon>
    </lineage>
</organism>
<proteinExistence type="evidence at protein level"/>
<sequence>MAQPGDPRRLCRLVQEGRLRALKEELQAAGGCPGPAGDTLLHCAARHGHRDVLAYLAEAWGMDIEATNRDYKRPLHEAASMGHRDCVRYLLGRGAAVDCLKKADWTPLMMACTRKNLGVIQELVEHGANPLLKNKDGWNSFHIASREGDPLILQYLLTVCPGAWKTESKIRRTPLHTAAMHGHLEAVKVLLKRCQYEPDYRDNCGVTALMDAIQCGHIDVARLLLDEHGACLSAEDSLGAQALHRAAVTGQDEAIRFLVSELGVDVDVRATSTHLTALHYAAKEGHTSTIQTLLSLGADINSKDEKNRSALHLACAGQHLACAKFLLQSGLKDSEDITGTLAQQLPRRADVLQGSGHSAMT</sequence>
<accession>Q6P6B7</accession>
<accession>A6NEF0</accession>
<accession>F8WEI4</accession>
<accession>Q9NT01</accession>
<feature type="chain" id="PRO_0000240831" description="Ankyrin repeat domain-containing protein 16">
    <location>
        <begin position="1"/>
        <end position="361"/>
    </location>
</feature>
<feature type="repeat" description="ANK 1">
    <location>
        <begin position="36"/>
        <end position="66"/>
    </location>
</feature>
<feature type="repeat" description="ANK 2">
    <location>
        <begin position="70"/>
        <end position="99"/>
    </location>
</feature>
<feature type="repeat" description="ANK 3">
    <location>
        <begin position="103"/>
        <end position="132"/>
    </location>
</feature>
<feature type="repeat" description="ANK 4">
    <location>
        <begin position="136"/>
        <end position="165"/>
    </location>
</feature>
<feature type="repeat" description="ANK 5">
    <location>
        <begin position="170"/>
        <end position="200"/>
    </location>
</feature>
<feature type="repeat" description="ANK 6">
    <location>
        <begin position="204"/>
        <end position="234"/>
    </location>
</feature>
<feature type="repeat" description="ANK 7">
    <location>
        <begin position="238"/>
        <end position="268"/>
    </location>
</feature>
<feature type="repeat" description="ANK 8">
    <location>
        <begin position="273"/>
        <end position="302"/>
    </location>
</feature>
<feature type="repeat" description="ANK 9">
    <location>
        <begin position="306"/>
        <end position="335"/>
    </location>
</feature>
<feature type="site" description="Required to capture Ser that is misactivated by AARS/AlaRS" evidence="1">
    <location>
        <position position="102"/>
    </location>
</feature>
<feature type="site" description="Required to capture Ser that is misactivated by AARS/AlaRS" evidence="1">
    <location>
        <position position="135"/>
    </location>
</feature>
<feature type="site" description="Required to capture Ser that is misactivated by AARS/AlaRS" evidence="1">
    <location>
        <position position="165"/>
    </location>
</feature>
<feature type="splice variant" id="VSP_047046" description="In isoform 2." evidence="3">
    <original>EGHTSTIQTLLSLGADINSKD</original>
    <variation>PCIWPVQVSTWPVPSFSCSRD</variation>
    <location>
        <begin position="284"/>
        <end position="304"/>
    </location>
</feature>
<feature type="splice variant" id="VSP_047047" description="In isoform 2." evidence="3">
    <location>
        <begin position="305"/>
        <end position="361"/>
    </location>
</feature>
<feature type="sequence variant" id="VAR_033503" description="In dbSNP:rs2296136.">
    <original>A</original>
    <variation>G</variation>
    <location>
        <position position="128"/>
    </location>
</feature>
<feature type="sequence variant" id="VAR_026832" description="In dbSNP:rs1052420." evidence="2">
    <original>Q</original>
    <variation>R</variation>
    <location>
        <position position="353"/>
    </location>
</feature>